<sequence>MNKFVKSLLVAGSVAALAACSSSNNDAAGNGAAQTFGGYSVADLQQRYNTVYFGFDKYDITGEYVQILDAHAAYLNATPAAKVLVEGNTDERGTPEYNIALGQRRADAVKGYLAGKGVDAGKLGTVSYGEEKPAVLGHDEAAYSKNRRAVLAY</sequence>
<reference key="1">
    <citation type="journal article" date="1988" name="J. Bacteriol.">
        <title>Cloning of genes encoding a 15,000-dalton peptidoglycan-associated outer membrane lipoprotein and an antigenically related 15,000-dalton protein from Haemophilus influenzae.</title>
        <authorList>
            <person name="Deich R.A."/>
            <person name="Metcalf B.J."/>
            <person name="Finn C.W."/>
            <person name="Farley J.E."/>
            <person name="Green B.A."/>
        </authorList>
    </citation>
    <scope>NUCLEOTIDE SEQUENCE [GENOMIC DNA]</scope>
    <scope>PARTIAL PROTEIN SEQUENCE</scope>
    <scope>DIACYLGLYCEROL AT CYS-20</scope>
    <scope>PALMITOYLATION AT CYS-20</scope>
</reference>
<reference key="2">
    <citation type="journal article" date="1988" name="Infect. Immun.">
        <title>Cloning and sequencing of Haemophilus influenzae outer membrane protein P6.</title>
        <authorList>
            <person name="Nelson M.B."/>
            <person name="Apicella M.A."/>
            <person name="Murphy T.F."/>
            <person name="Vankeulen H."/>
            <person name="Spotila L.D."/>
            <person name="Rekosh D."/>
        </authorList>
    </citation>
    <scope>NUCLEOTIDE SEQUENCE [GENOMIC DNA]</scope>
</reference>
<reference key="3">
    <citation type="journal article" date="1995" name="Science">
        <title>Whole-genome random sequencing and assembly of Haemophilus influenzae Rd.</title>
        <authorList>
            <person name="Fleischmann R.D."/>
            <person name="Adams M.D."/>
            <person name="White O."/>
            <person name="Clayton R.A."/>
            <person name="Kirkness E.F."/>
            <person name="Kerlavage A.R."/>
            <person name="Bult C.J."/>
            <person name="Tomb J.-F."/>
            <person name="Dougherty B.A."/>
            <person name="Merrick J.M."/>
            <person name="McKenney K."/>
            <person name="Sutton G.G."/>
            <person name="FitzHugh W."/>
            <person name="Fields C.A."/>
            <person name="Gocayne J.D."/>
            <person name="Scott J.D."/>
            <person name="Shirley R."/>
            <person name="Liu L.-I."/>
            <person name="Glodek A."/>
            <person name="Kelley J.M."/>
            <person name="Weidman J.F."/>
            <person name="Phillips C.A."/>
            <person name="Spriggs T."/>
            <person name="Hedblom E."/>
            <person name="Cotton M.D."/>
            <person name="Utterback T.R."/>
            <person name="Hanna M.C."/>
            <person name="Nguyen D.T."/>
            <person name="Saudek D.M."/>
            <person name="Brandon R.C."/>
            <person name="Fine L.D."/>
            <person name="Fritchman J.L."/>
            <person name="Fuhrmann J.L."/>
            <person name="Geoghagen N.S.M."/>
            <person name="Gnehm C.L."/>
            <person name="McDonald L.A."/>
            <person name="Small K.V."/>
            <person name="Fraser C.M."/>
            <person name="Smith H.O."/>
            <person name="Venter J.C."/>
        </authorList>
    </citation>
    <scope>NUCLEOTIDE SEQUENCE [LARGE SCALE GENOMIC DNA]</scope>
    <source>
        <strain>ATCC 51907 / DSM 11121 / KW20 / Rd</strain>
    </source>
</reference>
<reference key="4">
    <citation type="journal article" date="2006" name="Biochemistry">
        <title>Peptidoglycan recognition by Pal, an outer membrane lipoprotein.</title>
        <authorList>
            <person name="Parsons L.M."/>
            <person name="Lin F."/>
            <person name="Orban J."/>
        </authorList>
    </citation>
    <scope>STRUCTURE BY NMR OF 20-153 IN COMPLEX WITH PEPTIDOGLYCAN</scope>
</reference>
<keyword id="KW-0002">3D-structure</keyword>
<keyword id="KW-0131">Cell cycle</keyword>
<keyword id="KW-0132">Cell division</keyword>
<keyword id="KW-0998">Cell outer membrane</keyword>
<keyword id="KW-0903">Direct protein sequencing</keyword>
<keyword id="KW-0449">Lipoprotein</keyword>
<keyword id="KW-0472">Membrane</keyword>
<keyword id="KW-0564">Palmitate</keyword>
<keyword id="KW-1185">Reference proteome</keyword>
<keyword id="KW-0732">Signal</keyword>
<gene>
    <name evidence="1" type="primary">pal</name>
    <name type="synonym">ompP6</name>
    <name type="ordered locus">HI_0381</name>
</gene>
<evidence type="ECO:0000255" key="1">
    <source>
        <dbReference type="HAMAP-Rule" id="MF_02204"/>
    </source>
</evidence>
<evidence type="ECO:0000269" key="2">
    <source>
    </source>
</evidence>
<evidence type="ECO:0007829" key="3">
    <source>
        <dbReference type="PDB" id="2AIZ"/>
    </source>
</evidence>
<protein>
    <recommendedName>
        <fullName evidence="1">Peptidoglycan-associated lipoprotein</fullName>
        <shortName evidence="1">PAL</shortName>
    </recommendedName>
    <alternativeName>
        <fullName>15 kDa peptidoglycan-associated lipoprotein</fullName>
        <shortName>PC protein</shortName>
    </alternativeName>
    <alternativeName>
        <fullName>Outer membrane protein P6</fullName>
        <shortName>OMP P6</shortName>
    </alternativeName>
</protein>
<organism>
    <name type="scientific">Haemophilus influenzae (strain ATCC 51907 / DSM 11121 / KW20 / Rd)</name>
    <dbReference type="NCBI Taxonomy" id="71421"/>
    <lineage>
        <taxon>Bacteria</taxon>
        <taxon>Pseudomonadati</taxon>
        <taxon>Pseudomonadota</taxon>
        <taxon>Gammaproteobacteria</taxon>
        <taxon>Pasteurellales</taxon>
        <taxon>Pasteurellaceae</taxon>
        <taxon>Haemophilus</taxon>
    </lineage>
</organism>
<accession>P10324</accession>
<comment type="function">
    <text evidence="1">Part of the Tol-Pal system, which plays a role in outer membrane invagination during cell division and is important for maintaining outer membrane integrity.</text>
</comment>
<comment type="subunit">
    <text evidence="1">The Tol-Pal system is composed of five core proteins: the inner membrane proteins TolA, TolQ and TolR, the periplasmic protein TolB and the outer membrane protein Pal. They form a network linking the inner and outer membranes and the peptidoglycan layer.</text>
</comment>
<comment type="subcellular location">
    <subcellularLocation>
        <location evidence="1">Cell outer membrane</location>
        <topology evidence="1">Lipid-anchor</topology>
    </subcellularLocation>
</comment>
<comment type="similarity">
    <text evidence="1">Belongs to the Pal lipoprotein family.</text>
</comment>
<feature type="signal peptide" evidence="1">
    <location>
        <begin position="1"/>
        <end position="19"/>
    </location>
</feature>
<feature type="chain" id="PRO_0000020123" description="Peptidoglycan-associated lipoprotein" evidence="1">
    <location>
        <begin position="20"/>
        <end position="153"/>
    </location>
</feature>
<feature type="domain" description="OmpA-like" evidence="1">
    <location>
        <begin position="40"/>
        <end position="153"/>
    </location>
</feature>
<feature type="region of interest" description="Peptidoglycan binding">
    <location>
        <begin position="55"/>
        <end position="56"/>
    </location>
</feature>
<feature type="region of interest" description="Peptidoglycan binding">
    <location>
        <begin position="97"/>
        <end position="101"/>
    </location>
</feature>
<feature type="lipid moiety-binding region" description="N-palmitoyl cysteine" evidence="1 2">
    <location>
        <position position="20"/>
    </location>
</feature>
<feature type="lipid moiety-binding region" description="S-diacylglycerol cysteine" evidence="1 2">
    <location>
        <position position="20"/>
    </location>
</feature>
<feature type="strand" evidence="3">
    <location>
        <begin position="26"/>
        <end position="29"/>
    </location>
</feature>
<feature type="helix" evidence="3">
    <location>
        <begin position="41"/>
        <end position="44"/>
    </location>
</feature>
<feature type="turn" evidence="3">
    <location>
        <begin position="45"/>
        <end position="47"/>
    </location>
</feature>
<feature type="strand" evidence="3">
    <location>
        <begin position="50"/>
        <end position="52"/>
    </location>
</feature>
<feature type="helix" evidence="3">
    <location>
        <begin position="62"/>
        <end position="77"/>
    </location>
</feature>
<feature type="strand" evidence="3">
    <location>
        <begin position="83"/>
        <end position="88"/>
    </location>
</feature>
<feature type="strand" evidence="3">
    <location>
        <begin position="91"/>
        <end position="93"/>
    </location>
</feature>
<feature type="helix" evidence="3">
    <location>
        <begin position="95"/>
        <end position="115"/>
    </location>
</feature>
<feature type="helix" evidence="3">
    <location>
        <begin position="120"/>
        <end position="122"/>
    </location>
</feature>
<feature type="strand" evidence="3">
    <location>
        <begin position="123"/>
        <end position="127"/>
    </location>
</feature>
<feature type="turn" evidence="3">
    <location>
        <begin position="129"/>
        <end position="131"/>
    </location>
</feature>
<feature type="helix" evidence="3">
    <location>
        <begin position="140"/>
        <end position="146"/>
    </location>
</feature>
<feature type="strand" evidence="3">
    <location>
        <begin position="147"/>
        <end position="152"/>
    </location>
</feature>
<proteinExistence type="evidence at protein level"/>
<dbReference type="EMBL" id="M19391">
    <property type="protein sequence ID" value="AAA24994.1"/>
    <property type="molecule type" value="Genomic_DNA"/>
</dbReference>
<dbReference type="EMBL" id="M18878">
    <property type="protein sequence ID" value="AAA24940.1"/>
    <property type="molecule type" value="Genomic_DNA"/>
</dbReference>
<dbReference type="EMBL" id="L42023">
    <property type="protein sequence ID" value="AAC22039.1"/>
    <property type="molecule type" value="Genomic_DNA"/>
</dbReference>
<dbReference type="PIR" id="A28543">
    <property type="entry name" value="A28543"/>
</dbReference>
<dbReference type="RefSeq" id="NP_438542.1">
    <property type="nucleotide sequence ID" value="NC_000907.1"/>
</dbReference>
<dbReference type="PDB" id="2AIZ">
    <property type="method" value="NMR"/>
    <property type="chains" value="P=20-153"/>
</dbReference>
<dbReference type="PDBsum" id="2AIZ"/>
<dbReference type="BMRB" id="P10324"/>
<dbReference type="SMR" id="P10324"/>
<dbReference type="STRING" id="71421.HI_0381"/>
<dbReference type="Allergome" id="7668">
    <property type="allergen name" value="Hae in P6"/>
</dbReference>
<dbReference type="EnsemblBacteria" id="AAC22039">
    <property type="protein sequence ID" value="AAC22039"/>
    <property type="gene ID" value="HI_0381"/>
</dbReference>
<dbReference type="KEGG" id="hin:HI_0381"/>
<dbReference type="PATRIC" id="fig|71421.8.peg.399"/>
<dbReference type="eggNOG" id="COG2885">
    <property type="taxonomic scope" value="Bacteria"/>
</dbReference>
<dbReference type="HOGENOM" id="CLU_016890_9_4_6"/>
<dbReference type="OrthoDB" id="9809164at2"/>
<dbReference type="PhylomeDB" id="P10324"/>
<dbReference type="BioCyc" id="HINF71421:G1GJ1-396-MONOMER"/>
<dbReference type="EvolutionaryTrace" id="P10324"/>
<dbReference type="Proteomes" id="UP000000579">
    <property type="component" value="Chromosome"/>
</dbReference>
<dbReference type="GO" id="GO:0009279">
    <property type="term" value="C:cell outer membrane"/>
    <property type="evidence" value="ECO:0000318"/>
    <property type="project" value="GO_Central"/>
</dbReference>
<dbReference type="GO" id="GO:0051301">
    <property type="term" value="P:cell division"/>
    <property type="evidence" value="ECO:0007669"/>
    <property type="project" value="UniProtKB-UniRule"/>
</dbReference>
<dbReference type="CDD" id="cd07185">
    <property type="entry name" value="OmpA_C-like"/>
    <property type="match status" value="1"/>
</dbReference>
<dbReference type="FunFam" id="3.30.1330.60:FF:000002">
    <property type="entry name" value="Peptidoglycan-associated lipoprotein"/>
    <property type="match status" value="1"/>
</dbReference>
<dbReference type="Gene3D" id="3.30.1330.60">
    <property type="entry name" value="OmpA-like domain"/>
    <property type="match status" value="1"/>
</dbReference>
<dbReference type="HAMAP" id="MF_02204">
    <property type="entry name" value="Pal"/>
    <property type="match status" value="1"/>
</dbReference>
<dbReference type="InterPro" id="IPR050330">
    <property type="entry name" value="Bact_OuterMem_StrucFunc"/>
</dbReference>
<dbReference type="InterPro" id="IPR006664">
    <property type="entry name" value="OMP_bac"/>
</dbReference>
<dbReference type="InterPro" id="IPR006665">
    <property type="entry name" value="OmpA-like"/>
</dbReference>
<dbReference type="InterPro" id="IPR006690">
    <property type="entry name" value="OMPA-like_CS"/>
</dbReference>
<dbReference type="InterPro" id="IPR036737">
    <property type="entry name" value="OmpA-like_sf"/>
</dbReference>
<dbReference type="InterPro" id="IPR039001">
    <property type="entry name" value="Pal"/>
</dbReference>
<dbReference type="InterPro" id="IPR014169">
    <property type="entry name" value="Pal_lipo_C"/>
</dbReference>
<dbReference type="NCBIfam" id="TIGR02802">
    <property type="entry name" value="Pal_lipo"/>
    <property type="match status" value="1"/>
</dbReference>
<dbReference type="PANTHER" id="PTHR30329:SF21">
    <property type="entry name" value="LIPOPROTEIN YIAD-RELATED"/>
    <property type="match status" value="1"/>
</dbReference>
<dbReference type="PANTHER" id="PTHR30329">
    <property type="entry name" value="STATOR ELEMENT OF FLAGELLAR MOTOR COMPLEX"/>
    <property type="match status" value="1"/>
</dbReference>
<dbReference type="Pfam" id="PF00691">
    <property type="entry name" value="OmpA"/>
    <property type="match status" value="1"/>
</dbReference>
<dbReference type="PRINTS" id="PR01021">
    <property type="entry name" value="OMPADOMAIN"/>
</dbReference>
<dbReference type="SUPFAM" id="SSF103088">
    <property type="entry name" value="OmpA-like"/>
    <property type="match status" value="1"/>
</dbReference>
<dbReference type="PROSITE" id="PS01068">
    <property type="entry name" value="OMPA_1"/>
    <property type="match status" value="1"/>
</dbReference>
<dbReference type="PROSITE" id="PS51123">
    <property type="entry name" value="OMPA_2"/>
    <property type="match status" value="1"/>
</dbReference>
<dbReference type="PROSITE" id="PS51257">
    <property type="entry name" value="PROKAR_LIPOPROTEIN"/>
    <property type="match status" value="1"/>
</dbReference>
<name>PAL_HAEIN</name>